<comment type="function">
    <text evidence="1">Increases the formation of ribosomal termination complexes and stimulates activities of RF-1 and RF-2. It binds guanine nucleotides and has strong preference for UGA stop codons. It may interact directly with the ribosome. The stimulation of RF-1 and RF-2 is significantly reduced by GTP and GDP, but not by GMP.</text>
</comment>
<comment type="subcellular location">
    <subcellularLocation>
        <location evidence="1">Cytoplasm</location>
    </subcellularLocation>
</comment>
<comment type="similarity">
    <text evidence="1">Belongs to the TRAFAC class translation factor GTPase superfamily. Classic translation factor GTPase family. PrfC subfamily.</text>
</comment>
<feature type="chain" id="PRO_0000242201" description="Peptide chain release factor 3">
    <location>
        <begin position="1"/>
        <end position="531"/>
    </location>
</feature>
<feature type="domain" description="tr-type G">
    <location>
        <begin position="13"/>
        <end position="282"/>
    </location>
</feature>
<feature type="binding site" evidence="1">
    <location>
        <begin position="22"/>
        <end position="29"/>
    </location>
    <ligand>
        <name>GTP</name>
        <dbReference type="ChEBI" id="CHEBI:37565"/>
    </ligand>
</feature>
<feature type="binding site" evidence="1">
    <location>
        <begin position="90"/>
        <end position="94"/>
    </location>
    <ligand>
        <name>GTP</name>
        <dbReference type="ChEBI" id="CHEBI:37565"/>
    </ligand>
</feature>
<feature type="binding site" evidence="1">
    <location>
        <begin position="144"/>
        <end position="147"/>
    </location>
    <ligand>
        <name>GTP</name>
        <dbReference type="ChEBI" id="CHEBI:37565"/>
    </ligand>
</feature>
<dbReference type="EMBL" id="CP000323">
    <property type="protein sequence ID" value="ABE74205.1"/>
    <property type="molecule type" value="Genomic_DNA"/>
</dbReference>
<dbReference type="RefSeq" id="WP_011512790.1">
    <property type="nucleotide sequence ID" value="NC_007969.1"/>
</dbReference>
<dbReference type="SMR" id="Q1QDP8"/>
<dbReference type="STRING" id="335284.Pcryo_0422"/>
<dbReference type="KEGG" id="pcr:Pcryo_0422"/>
<dbReference type="eggNOG" id="COG4108">
    <property type="taxonomic scope" value="Bacteria"/>
</dbReference>
<dbReference type="HOGENOM" id="CLU_002794_2_1_6"/>
<dbReference type="Proteomes" id="UP000002425">
    <property type="component" value="Chromosome"/>
</dbReference>
<dbReference type="GO" id="GO:0005829">
    <property type="term" value="C:cytosol"/>
    <property type="evidence" value="ECO:0007669"/>
    <property type="project" value="TreeGrafter"/>
</dbReference>
<dbReference type="GO" id="GO:0005525">
    <property type="term" value="F:GTP binding"/>
    <property type="evidence" value="ECO:0007669"/>
    <property type="project" value="UniProtKB-UniRule"/>
</dbReference>
<dbReference type="GO" id="GO:0003924">
    <property type="term" value="F:GTPase activity"/>
    <property type="evidence" value="ECO:0007669"/>
    <property type="project" value="InterPro"/>
</dbReference>
<dbReference type="GO" id="GO:0097216">
    <property type="term" value="F:guanosine tetraphosphate binding"/>
    <property type="evidence" value="ECO:0007669"/>
    <property type="project" value="UniProtKB-ARBA"/>
</dbReference>
<dbReference type="GO" id="GO:0016150">
    <property type="term" value="F:translation release factor activity, codon nonspecific"/>
    <property type="evidence" value="ECO:0007669"/>
    <property type="project" value="TreeGrafter"/>
</dbReference>
<dbReference type="GO" id="GO:0016149">
    <property type="term" value="F:translation release factor activity, codon specific"/>
    <property type="evidence" value="ECO:0007669"/>
    <property type="project" value="UniProtKB-UniRule"/>
</dbReference>
<dbReference type="GO" id="GO:0006449">
    <property type="term" value="P:regulation of translational termination"/>
    <property type="evidence" value="ECO:0007669"/>
    <property type="project" value="UniProtKB-UniRule"/>
</dbReference>
<dbReference type="CDD" id="cd04169">
    <property type="entry name" value="RF3"/>
    <property type="match status" value="1"/>
</dbReference>
<dbReference type="CDD" id="cd03689">
    <property type="entry name" value="RF3_II"/>
    <property type="match status" value="1"/>
</dbReference>
<dbReference type="CDD" id="cd16259">
    <property type="entry name" value="RF3_III"/>
    <property type="match status" value="1"/>
</dbReference>
<dbReference type="FunFam" id="2.40.30.10:FF:000040">
    <property type="entry name" value="Peptide chain release factor 3"/>
    <property type="match status" value="1"/>
</dbReference>
<dbReference type="FunFam" id="3.30.70.3280:FF:000001">
    <property type="entry name" value="Peptide chain release factor 3"/>
    <property type="match status" value="1"/>
</dbReference>
<dbReference type="FunFam" id="3.40.50.300:FF:000542">
    <property type="entry name" value="Peptide chain release factor 3"/>
    <property type="match status" value="1"/>
</dbReference>
<dbReference type="Gene3D" id="3.40.50.300">
    <property type="entry name" value="P-loop containing nucleotide triphosphate hydrolases"/>
    <property type="match status" value="2"/>
</dbReference>
<dbReference type="Gene3D" id="3.30.70.3280">
    <property type="entry name" value="Peptide chain release factor 3, domain III"/>
    <property type="match status" value="1"/>
</dbReference>
<dbReference type="HAMAP" id="MF_00072">
    <property type="entry name" value="Rel_fac_3"/>
    <property type="match status" value="1"/>
</dbReference>
<dbReference type="InterPro" id="IPR053905">
    <property type="entry name" value="EF-G-like_DII"/>
</dbReference>
<dbReference type="InterPro" id="IPR035647">
    <property type="entry name" value="EFG_III/V"/>
</dbReference>
<dbReference type="InterPro" id="IPR031157">
    <property type="entry name" value="G_TR_CS"/>
</dbReference>
<dbReference type="InterPro" id="IPR027417">
    <property type="entry name" value="P-loop_NTPase"/>
</dbReference>
<dbReference type="InterPro" id="IPR004548">
    <property type="entry name" value="PrfC"/>
</dbReference>
<dbReference type="InterPro" id="IPR032090">
    <property type="entry name" value="RF3_C"/>
</dbReference>
<dbReference type="InterPro" id="IPR038467">
    <property type="entry name" value="RF3_dom_3_sf"/>
</dbReference>
<dbReference type="InterPro" id="IPR041732">
    <property type="entry name" value="RF3_GTP-bd"/>
</dbReference>
<dbReference type="InterPro" id="IPR005225">
    <property type="entry name" value="Small_GTP-bd"/>
</dbReference>
<dbReference type="InterPro" id="IPR000795">
    <property type="entry name" value="T_Tr_GTP-bd_dom"/>
</dbReference>
<dbReference type="InterPro" id="IPR009000">
    <property type="entry name" value="Transl_B-barrel_sf"/>
</dbReference>
<dbReference type="NCBIfam" id="TIGR00503">
    <property type="entry name" value="prfC"/>
    <property type="match status" value="1"/>
</dbReference>
<dbReference type="NCBIfam" id="NF001964">
    <property type="entry name" value="PRK00741.1"/>
    <property type="match status" value="1"/>
</dbReference>
<dbReference type="NCBIfam" id="TIGR00231">
    <property type="entry name" value="small_GTP"/>
    <property type="match status" value="1"/>
</dbReference>
<dbReference type="PANTHER" id="PTHR43556">
    <property type="entry name" value="PEPTIDE CHAIN RELEASE FACTOR RF3"/>
    <property type="match status" value="1"/>
</dbReference>
<dbReference type="PANTHER" id="PTHR43556:SF2">
    <property type="entry name" value="PEPTIDE CHAIN RELEASE FACTOR RF3"/>
    <property type="match status" value="1"/>
</dbReference>
<dbReference type="Pfam" id="PF22042">
    <property type="entry name" value="EF-G_D2"/>
    <property type="match status" value="1"/>
</dbReference>
<dbReference type="Pfam" id="PF00009">
    <property type="entry name" value="GTP_EFTU"/>
    <property type="match status" value="1"/>
</dbReference>
<dbReference type="Pfam" id="PF16658">
    <property type="entry name" value="RF3_C"/>
    <property type="match status" value="1"/>
</dbReference>
<dbReference type="PRINTS" id="PR00315">
    <property type="entry name" value="ELONGATNFCT"/>
</dbReference>
<dbReference type="SUPFAM" id="SSF54980">
    <property type="entry name" value="EF-G C-terminal domain-like"/>
    <property type="match status" value="1"/>
</dbReference>
<dbReference type="SUPFAM" id="SSF52540">
    <property type="entry name" value="P-loop containing nucleoside triphosphate hydrolases"/>
    <property type="match status" value="1"/>
</dbReference>
<dbReference type="SUPFAM" id="SSF50447">
    <property type="entry name" value="Translation proteins"/>
    <property type="match status" value="1"/>
</dbReference>
<dbReference type="PROSITE" id="PS00301">
    <property type="entry name" value="G_TR_1"/>
    <property type="match status" value="1"/>
</dbReference>
<dbReference type="PROSITE" id="PS51722">
    <property type="entry name" value="G_TR_2"/>
    <property type="match status" value="1"/>
</dbReference>
<keyword id="KW-0963">Cytoplasm</keyword>
<keyword id="KW-0342">GTP-binding</keyword>
<keyword id="KW-0547">Nucleotide-binding</keyword>
<keyword id="KW-0648">Protein biosynthesis</keyword>
<proteinExistence type="inferred from homology"/>
<evidence type="ECO:0000255" key="1">
    <source>
        <dbReference type="HAMAP-Rule" id="MF_00072"/>
    </source>
</evidence>
<protein>
    <recommendedName>
        <fullName evidence="1">Peptide chain release factor 3</fullName>
        <shortName evidence="1">RF-3</shortName>
    </recommendedName>
</protein>
<reference key="1">
    <citation type="submission" date="2006-03" db="EMBL/GenBank/DDBJ databases">
        <title>Complete sequence of chromosome of Psychrobacter cryohalolentis K5.</title>
        <authorList>
            <consortium name="US DOE Joint Genome Institute"/>
            <person name="Copeland A."/>
            <person name="Lucas S."/>
            <person name="Lapidus A."/>
            <person name="Barry K."/>
            <person name="Detter J.C."/>
            <person name="Glavina T."/>
            <person name="Hammon N."/>
            <person name="Israni S."/>
            <person name="Dalin E."/>
            <person name="Tice H."/>
            <person name="Pitluck S."/>
            <person name="Brettin T."/>
            <person name="Bruce D."/>
            <person name="Han C."/>
            <person name="Tapia R."/>
            <person name="Sims D.R."/>
            <person name="Gilna P."/>
            <person name="Schmutz J."/>
            <person name="Larimer F."/>
            <person name="Land M."/>
            <person name="Hauser L."/>
            <person name="Kyrpides N."/>
            <person name="Kim E."/>
            <person name="Richardson P."/>
        </authorList>
    </citation>
    <scope>NUCLEOTIDE SEQUENCE [LARGE SCALE GENOMIC DNA]</scope>
    <source>
        <strain>ATCC BAA-1226 / DSM 17306 / VKM B-2378 / K5</strain>
    </source>
</reference>
<accession>Q1QDP8</accession>
<gene>
    <name evidence="1" type="primary">prfC</name>
    <name type="ordered locus">Pcryo_0422</name>
</gene>
<sequence length="531" mass="59901">MSVDPKKLNKEVAKRRTFAIISHPDAGKTTMTEKLLLWGKAIQVVGEVKGRKTDRHATSDWMSMEQERGISITTSVMQFPYKEHMVNLLDTPGHADFSEDTYRTLTAVDSALMMVDGAKGVEERTIKLMEVCRMRDTPIISFVNKLDRQIREPLELLSEIEAVLKIKCIPVTWPIGMGQDFVGVYHLTENKTYFYEKGHGGDMTVAETREGYDYPDIRERLGALMFASFEESLELVQMALEDFDVDEFLAGEMTPVLFGTALGNFGVNMVLDTLIKYAPPPKAHPTNEREVAATETTFSGFVFKIQANMDPRHRDRIAFLRVCSGKYEKGMKLKHVRLGKDVRIADALTFLAGDREALEEAYPGDIIGLHNHGTISIGDSFTEGEELNFTGIPHFAPELFRRVILKDPLKSKALQKGLQQLSEEGATQVFMPQINNDLILGAVGVLQFEVVAHRLKEEYKVQCIFEPVSIATVRWIHCDDEVALAKFKRKAHDQLSLDGGGHLTYLAPSRVNLQLMQDRYPEVTFSNTREH</sequence>
<name>RF3_PSYCK</name>
<organism>
    <name type="scientific">Psychrobacter cryohalolentis (strain ATCC BAA-1226 / DSM 17306 / VKM B-2378 / K5)</name>
    <dbReference type="NCBI Taxonomy" id="335284"/>
    <lineage>
        <taxon>Bacteria</taxon>
        <taxon>Pseudomonadati</taxon>
        <taxon>Pseudomonadota</taxon>
        <taxon>Gammaproteobacteria</taxon>
        <taxon>Moraxellales</taxon>
        <taxon>Moraxellaceae</taxon>
        <taxon>Psychrobacter</taxon>
    </lineage>
</organism>